<accession>B9DP10</accession>
<feature type="chain" id="PRO_0000386518" description="Putative lipid kinase Sca_1050">
    <location>
        <begin position="1"/>
        <end position="306"/>
    </location>
</feature>
<feature type="domain" description="DAGKc" evidence="2">
    <location>
        <begin position="3"/>
        <end position="139"/>
    </location>
</feature>
<feature type="active site" description="Proton acceptor" evidence="1">
    <location>
        <position position="281"/>
    </location>
</feature>
<feature type="binding site" evidence="2">
    <location>
        <position position="44"/>
    </location>
    <ligand>
        <name>ATP</name>
        <dbReference type="ChEBI" id="CHEBI:30616"/>
    </ligand>
</feature>
<feature type="binding site" evidence="2">
    <location>
        <begin position="74"/>
        <end position="80"/>
    </location>
    <ligand>
        <name>ATP</name>
        <dbReference type="ChEBI" id="CHEBI:30616"/>
    </ligand>
</feature>
<feature type="binding site" evidence="2">
    <location>
        <position position="101"/>
    </location>
    <ligand>
        <name>ATP</name>
        <dbReference type="ChEBI" id="CHEBI:30616"/>
    </ligand>
</feature>
<feature type="binding site" evidence="1">
    <location>
        <position position="220"/>
    </location>
    <ligand>
        <name>Mg(2+)</name>
        <dbReference type="ChEBI" id="CHEBI:18420"/>
    </ligand>
</feature>
<feature type="binding site" evidence="1">
    <location>
        <position position="223"/>
    </location>
    <ligand>
        <name>Mg(2+)</name>
        <dbReference type="ChEBI" id="CHEBI:18420"/>
    </ligand>
</feature>
<feature type="binding site" evidence="1">
    <location>
        <position position="225"/>
    </location>
    <ligand>
        <name>Mg(2+)</name>
        <dbReference type="ChEBI" id="CHEBI:18420"/>
    </ligand>
</feature>
<name>Y1050_STACT</name>
<gene>
    <name type="ordered locus">Sca_1050</name>
</gene>
<comment type="function">
    <text evidence="1">May catalyze the ATP-dependent phosphorylation of lipids other than diacylglycerol (DAG).</text>
</comment>
<comment type="cofactor">
    <cofactor evidence="1">
        <name>Mg(2+)</name>
        <dbReference type="ChEBI" id="CHEBI:18420"/>
    </cofactor>
    <text evidence="1">Binds 1 Mg(2+) ion per subunit. This ion appears to have a structural role and is required for catalytic activity.</text>
</comment>
<comment type="similarity">
    <text evidence="3">Belongs to the diacylglycerol/lipid kinase family.</text>
</comment>
<sequence>MNQHFHRGILFYHQAAGQGNLYKSLGQVTESLTQMCDDLTLKLSEEGGDIAKFCDDLTQNQNGVSYDVFFVLGGDGTVNELVNGVARNNLEIPIGIIPGGTFNDFTKTLNLSPRTAAAANELLNSKIKSFDVLKVNDTYALNFAGIGMMVQNSENVDANKKRILGKFSYVFTTLKVIANPKIYQYTIKANNEEYSGETSMILIANGNYVGGSKIPLEDLSPSDGEMNIFVFKNHNMSLIKDFFQVKDSLRWNDITENIRLITTDEMKLETRPSTKIDIDGEIMFDTPVDIKLLKDKVKLLYIDVNE</sequence>
<protein>
    <recommendedName>
        <fullName>Putative lipid kinase Sca_1050</fullName>
        <ecNumber>2.7.1.-</ecNumber>
    </recommendedName>
</protein>
<proteinExistence type="inferred from homology"/>
<evidence type="ECO:0000250" key="1"/>
<evidence type="ECO:0000255" key="2">
    <source>
        <dbReference type="PROSITE-ProRule" id="PRU00783"/>
    </source>
</evidence>
<evidence type="ECO:0000305" key="3"/>
<reference key="1">
    <citation type="journal article" date="2009" name="Appl. Environ. Microbiol.">
        <title>Genome analysis of the meat starter culture bacterium Staphylococcus carnosus TM300.</title>
        <authorList>
            <person name="Rosenstein R."/>
            <person name="Nerz C."/>
            <person name="Biswas L."/>
            <person name="Resch A."/>
            <person name="Raddatz G."/>
            <person name="Schuster S.C."/>
            <person name="Goetz F."/>
        </authorList>
    </citation>
    <scope>NUCLEOTIDE SEQUENCE [LARGE SCALE GENOMIC DNA]</scope>
    <source>
        <strain>TM300</strain>
    </source>
</reference>
<dbReference type="EC" id="2.7.1.-"/>
<dbReference type="EMBL" id="AM295250">
    <property type="protein sequence ID" value="CAL27958.1"/>
    <property type="molecule type" value="Genomic_DNA"/>
</dbReference>
<dbReference type="RefSeq" id="WP_015900299.1">
    <property type="nucleotide sequence ID" value="NC_012121.1"/>
</dbReference>
<dbReference type="SMR" id="B9DP10"/>
<dbReference type="GeneID" id="93793474"/>
<dbReference type="KEGG" id="sca:SCA_1050"/>
<dbReference type="eggNOG" id="COG1597">
    <property type="taxonomic scope" value="Bacteria"/>
</dbReference>
<dbReference type="HOGENOM" id="CLU_045532_1_0_9"/>
<dbReference type="OrthoDB" id="142078at2"/>
<dbReference type="BioCyc" id="SCAR396513:SCA_RS05260-MONOMER"/>
<dbReference type="Proteomes" id="UP000000444">
    <property type="component" value="Chromosome"/>
</dbReference>
<dbReference type="GO" id="GO:0005886">
    <property type="term" value="C:plasma membrane"/>
    <property type="evidence" value="ECO:0007669"/>
    <property type="project" value="TreeGrafter"/>
</dbReference>
<dbReference type="GO" id="GO:0005524">
    <property type="term" value="F:ATP binding"/>
    <property type="evidence" value="ECO:0007669"/>
    <property type="project" value="UniProtKB-KW"/>
</dbReference>
<dbReference type="GO" id="GO:0004143">
    <property type="term" value="F:ATP-dependent diacylglycerol kinase activity"/>
    <property type="evidence" value="ECO:0007669"/>
    <property type="project" value="TreeGrafter"/>
</dbReference>
<dbReference type="GO" id="GO:0046872">
    <property type="term" value="F:metal ion binding"/>
    <property type="evidence" value="ECO:0007669"/>
    <property type="project" value="UniProtKB-KW"/>
</dbReference>
<dbReference type="GO" id="GO:0008654">
    <property type="term" value="P:phospholipid biosynthetic process"/>
    <property type="evidence" value="ECO:0007669"/>
    <property type="project" value="UniProtKB-KW"/>
</dbReference>
<dbReference type="Gene3D" id="2.60.200.40">
    <property type="match status" value="1"/>
</dbReference>
<dbReference type="Gene3D" id="3.40.50.10330">
    <property type="entry name" value="Probable inorganic polyphosphate/atp-NAD kinase, domain 1"/>
    <property type="match status" value="1"/>
</dbReference>
<dbReference type="InterPro" id="IPR017438">
    <property type="entry name" value="ATP-NAD_kinase_N"/>
</dbReference>
<dbReference type="InterPro" id="IPR005218">
    <property type="entry name" value="Diacylglycerol/lipid_kinase"/>
</dbReference>
<dbReference type="InterPro" id="IPR001206">
    <property type="entry name" value="Diacylglycerol_kinase_cat_dom"/>
</dbReference>
<dbReference type="InterPro" id="IPR050187">
    <property type="entry name" value="Lipid_Phosphate_FormReg"/>
</dbReference>
<dbReference type="InterPro" id="IPR016064">
    <property type="entry name" value="NAD/diacylglycerol_kinase_sf"/>
</dbReference>
<dbReference type="InterPro" id="IPR045540">
    <property type="entry name" value="YegS/DAGK_C"/>
</dbReference>
<dbReference type="NCBIfam" id="TIGR00147">
    <property type="entry name" value="YegS/Rv2252/BmrU family lipid kinase"/>
    <property type="match status" value="1"/>
</dbReference>
<dbReference type="PANTHER" id="PTHR12358:SF106">
    <property type="entry name" value="LIPID KINASE YEGS"/>
    <property type="match status" value="1"/>
</dbReference>
<dbReference type="PANTHER" id="PTHR12358">
    <property type="entry name" value="SPHINGOSINE KINASE"/>
    <property type="match status" value="1"/>
</dbReference>
<dbReference type="Pfam" id="PF00781">
    <property type="entry name" value="DAGK_cat"/>
    <property type="match status" value="1"/>
</dbReference>
<dbReference type="Pfam" id="PF19279">
    <property type="entry name" value="YegS_C"/>
    <property type="match status" value="1"/>
</dbReference>
<dbReference type="SMART" id="SM00046">
    <property type="entry name" value="DAGKc"/>
    <property type="match status" value="1"/>
</dbReference>
<dbReference type="SUPFAM" id="SSF111331">
    <property type="entry name" value="NAD kinase/diacylglycerol kinase-like"/>
    <property type="match status" value="1"/>
</dbReference>
<dbReference type="PROSITE" id="PS50146">
    <property type="entry name" value="DAGK"/>
    <property type="match status" value="1"/>
</dbReference>
<keyword id="KW-0067">ATP-binding</keyword>
<keyword id="KW-0418">Kinase</keyword>
<keyword id="KW-0444">Lipid biosynthesis</keyword>
<keyword id="KW-0443">Lipid metabolism</keyword>
<keyword id="KW-0460">Magnesium</keyword>
<keyword id="KW-0479">Metal-binding</keyword>
<keyword id="KW-0547">Nucleotide-binding</keyword>
<keyword id="KW-0594">Phospholipid biosynthesis</keyword>
<keyword id="KW-1208">Phospholipid metabolism</keyword>
<keyword id="KW-1185">Reference proteome</keyword>
<keyword id="KW-0808">Transferase</keyword>
<organism>
    <name type="scientific">Staphylococcus carnosus (strain TM300)</name>
    <dbReference type="NCBI Taxonomy" id="396513"/>
    <lineage>
        <taxon>Bacteria</taxon>
        <taxon>Bacillati</taxon>
        <taxon>Bacillota</taxon>
        <taxon>Bacilli</taxon>
        <taxon>Bacillales</taxon>
        <taxon>Staphylococcaceae</taxon>
        <taxon>Staphylococcus</taxon>
    </lineage>
</organism>